<proteinExistence type="inferred from homology"/>
<accession>B1LL91</accession>
<evidence type="ECO:0000255" key="1">
    <source>
        <dbReference type="HAMAP-Rule" id="MF_00049"/>
    </source>
</evidence>
<keyword id="KW-0030">Aminoacyl-tRNA synthetase</keyword>
<keyword id="KW-0067">ATP-binding</keyword>
<keyword id="KW-0963">Cytoplasm</keyword>
<keyword id="KW-0436">Ligase</keyword>
<keyword id="KW-0547">Nucleotide-binding</keyword>
<keyword id="KW-0648">Protein biosynthesis</keyword>
<reference key="1">
    <citation type="journal article" date="2008" name="J. Bacteriol.">
        <title>Insights into the environmental resistance gene pool from the genome sequence of the multidrug-resistant environmental isolate Escherichia coli SMS-3-5.</title>
        <authorList>
            <person name="Fricke W.F."/>
            <person name="Wright M.S."/>
            <person name="Lindell A.H."/>
            <person name="Harkins D.M."/>
            <person name="Baker-Austin C."/>
            <person name="Ravel J."/>
            <person name="Stepanauskas R."/>
        </authorList>
    </citation>
    <scope>NUCLEOTIDE SEQUENCE [LARGE SCALE GENOMIC DNA]</scope>
    <source>
        <strain>SMS-3-5 / SECEC</strain>
    </source>
</reference>
<comment type="catalytic activity">
    <reaction evidence="1">
        <text>tRNA(Leu) + L-leucine + ATP = L-leucyl-tRNA(Leu) + AMP + diphosphate</text>
        <dbReference type="Rhea" id="RHEA:11688"/>
        <dbReference type="Rhea" id="RHEA-COMP:9613"/>
        <dbReference type="Rhea" id="RHEA-COMP:9622"/>
        <dbReference type="ChEBI" id="CHEBI:30616"/>
        <dbReference type="ChEBI" id="CHEBI:33019"/>
        <dbReference type="ChEBI" id="CHEBI:57427"/>
        <dbReference type="ChEBI" id="CHEBI:78442"/>
        <dbReference type="ChEBI" id="CHEBI:78494"/>
        <dbReference type="ChEBI" id="CHEBI:456215"/>
        <dbReference type="EC" id="6.1.1.4"/>
    </reaction>
</comment>
<comment type="subcellular location">
    <subcellularLocation>
        <location evidence="1">Cytoplasm</location>
    </subcellularLocation>
</comment>
<comment type="similarity">
    <text evidence="1">Belongs to the class-I aminoacyl-tRNA synthetase family.</text>
</comment>
<sequence>MQEQYRPEEIESKVQLHWDEKRTFEVTEDESKEKYYCLSMLPYPSGRLHMGHVRNYTIGDVIARYQRMLGKNVLQPIGWDAFGLPAEGAAVKNNTAPAPWTYDNIAYMKNQLKMLGFGYDWSRELATCTPEYYRWEQKFFTELYKKGLVYKKTSAVNWCPNDQTVLANEQVIDGCCWRCDTKVERKEIPQWFIKITAYADELLNDLDKLDHWPDTVKTMQRNWIGRSEGVEITFNVNDYDNTLTVYTTRPDTFMGCSYLAVAAGHPLAQKAAENNPELAAFIDECRNTKVAEAEMATMEKKGVDTGFKAVHPLTGEEIPVWAANFVLMEYGTGAVMAVPGHDQRDYEFASKYGLNIKPVILAADGSEPDLSQQALTEKGVLFNSGEFNGLDHEAAFNAIADKLTAMGVGERKVNYRLRDWGVSRQRYWGAPIPMVTLEDGTVMPTPDDQLPVILPEDVVMDGITSPIKADPEWAKTTVNGMPALRETDTFDTFMESSWYYARYTCPEYKEGMLDSKAANYWLPVDIYIGGIEHAIMHLLYFRFFHKLMRDAGMVNSDEPAKQLLCQGMVLADAFYYVGENGERNWVSPVDAIVERDEKGRIVKAKDAAGHELVYTGMSKMSKSKNNGIDPQVMVERYGADTVRLFMMFASPADMTLEWQESGVEGANRFLKRVWKLVYEHTAKGDVAALNVDALTEDQKALRRDVHKTIAKVTDDIGRRQTFNTAIAAIMELMNKLAKAPTDSEQDRALMQEALLAVIRMLNPFTPHICFTLWQELKGEGDIDNAPWPVADEKAMVEDSTLVVVQVNGKVRAKITVPVDATEEQVRERAGQEHLVAKYLDGVTVRKVIYVPGKLLNLVVG</sequence>
<dbReference type="EC" id="6.1.1.4" evidence="1"/>
<dbReference type="EMBL" id="CP000970">
    <property type="protein sequence ID" value="ACB19667.1"/>
    <property type="molecule type" value="Genomic_DNA"/>
</dbReference>
<dbReference type="RefSeq" id="WP_012311951.1">
    <property type="nucleotide sequence ID" value="NC_010498.1"/>
</dbReference>
<dbReference type="SMR" id="B1LL91"/>
<dbReference type="KEGG" id="ecm:EcSMS35_0662"/>
<dbReference type="HOGENOM" id="CLU_004427_0_0_6"/>
<dbReference type="Proteomes" id="UP000007011">
    <property type="component" value="Chromosome"/>
</dbReference>
<dbReference type="GO" id="GO:0005829">
    <property type="term" value="C:cytosol"/>
    <property type="evidence" value="ECO:0007669"/>
    <property type="project" value="TreeGrafter"/>
</dbReference>
<dbReference type="GO" id="GO:0002161">
    <property type="term" value="F:aminoacyl-tRNA deacylase activity"/>
    <property type="evidence" value="ECO:0007669"/>
    <property type="project" value="InterPro"/>
</dbReference>
<dbReference type="GO" id="GO:0005524">
    <property type="term" value="F:ATP binding"/>
    <property type="evidence" value="ECO:0007669"/>
    <property type="project" value="UniProtKB-UniRule"/>
</dbReference>
<dbReference type="GO" id="GO:0004823">
    <property type="term" value="F:leucine-tRNA ligase activity"/>
    <property type="evidence" value="ECO:0007669"/>
    <property type="project" value="UniProtKB-UniRule"/>
</dbReference>
<dbReference type="GO" id="GO:0006429">
    <property type="term" value="P:leucyl-tRNA aminoacylation"/>
    <property type="evidence" value="ECO:0007669"/>
    <property type="project" value="UniProtKB-UniRule"/>
</dbReference>
<dbReference type="CDD" id="cd07958">
    <property type="entry name" value="Anticodon_Ia_Leu_BEm"/>
    <property type="match status" value="1"/>
</dbReference>
<dbReference type="CDD" id="cd00812">
    <property type="entry name" value="LeuRS_core"/>
    <property type="match status" value="1"/>
</dbReference>
<dbReference type="FunFam" id="1.10.730.10:FF:000002">
    <property type="entry name" value="Leucine--tRNA ligase"/>
    <property type="match status" value="2"/>
</dbReference>
<dbReference type="FunFam" id="2.20.28.290:FF:000001">
    <property type="entry name" value="Leucine--tRNA ligase"/>
    <property type="match status" value="1"/>
</dbReference>
<dbReference type="FunFam" id="3.10.20.590:FF:000001">
    <property type="entry name" value="Leucine--tRNA ligase"/>
    <property type="match status" value="1"/>
</dbReference>
<dbReference type="FunFam" id="3.40.50.620:FF:000003">
    <property type="entry name" value="Leucine--tRNA ligase"/>
    <property type="match status" value="1"/>
</dbReference>
<dbReference type="FunFam" id="3.40.50.620:FF:000124">
    <property type="entry name" value="Leucine--tRNA ligase"/>
    <property type="match status" value="1"/>
</dbReference>
<dbReference type="FunFam" id="3.90.740.10:FF:000012">
    <property type="entry name" value="Leucine--tRNA ligase"/>
    <property type="match status" value="1"/>
</dbReference>
<dbReference type="Gene3D" id="2.20.28.290">
    <property type="match status" value="1"/>
</dbReference>
<dbReference type="Gene3D" id="3.10.20.590">
    <property type="match status" value="1"/>
</dbReference>
<dbReference type="Gene3D" id="3.40.50.620">
    <property type="entry name" value="HUPs"/>
    <property type="match status" value="2"/>
</dbReference>
<dbReference type="Gene3D" id="1.10.730.10">
    <property type="entry name" value="Isoleucyl-tRNA Synthetase, Domain 1"/>
    <property type="match status" value="2"/>
</dbReference>
<dbReference type="HAMAP" id="MF_00049_B">
    <property type="entry name" value="Leu_tRNA_synth_B"/>
    <property type="match status" value="1"/>
</dbReference>
<dbReference type="InterPro" id="IPR001412">
    <property type="entry name" value="aa-tRNA-synth_I_CS"/>
</dbReference>
<dbReference type="InterPro" id="IPR002300">
    <property type="entry name" value="aa-tRNA-synth_Ia"/>
</dbReference>
<dbReference type="InterPro" id="IPR002302">
    <property type="entry name" value="Leu-tRNA-ligase"/>
</dbReference>
<dbReference type="InterPro" id="IPR025709">
    <property type="entry name" value="Leu_tRNA-synth_edit"/>
</dbReference>
<dbReference type="InterPro" id="IPR013155">
    <property type="entry name" value="M/V/L/I-tRNA-synth_anticd-bd"/>
</dbReference>
<dbReference type="InterPro" id="IPR015413">
    <property type="entry name" value="Methionyl/Leucyl_tRNA_Synth"/>
</dbReference>
<dbReference type="InterPro" id="IPR014729">
    <property type="entry name" value="Rossmann-like_a/b/a_fold"/>
</dbReference>
<dbReference type="InterPro" id="IPR009080">
    <property type="entry name" value="tRNAsynth_Ia_anticodon-bd"/>
</dbReference>
<dbReference type="InterPro" id="IPR009008">
    <property type="entry name" value="Val/Leu/Ile-tRNA-synth_edit"/>
</dbReference>
<dbReference type="NCBIfam" id="TIGR00396">
    <property type="entry name" value="leuS_bact"/>
    <property type="match status" value="1"/>
</dbReference>
<dbReference type="PANTHER" id="PTHR43740:SF2">
    <property type="entry name" value="LEUCINE--TRNA LIGASE, MITOCHONDRIAL"/>
    <property type="match status" value="1"/>
</dbReference>
<dbReference type="PANTHER" id="PTHR43740">
    <property type="entry name" value="LEUCYL-TRNA SYNTHETASE"/>
    <property type="match status" value="1"/>
</dbReference>
<dbReference type="Pfam" id="PF08264">
    <property type="entry name" value="Anticodon_1"/>
    <property type="match status" value="1"/>
</dbReference>
<dbReference type="Pfam" id="PF00133">
    <property type="entry name" value="tRNA-synt_1"/>
    <property type="match status" value="2"/>
</dbReference>
<dbReference type="Pfam" id="PF13603">
    <property type="entry name" value="tRNA-synt_1_2"/>
    <property type="match status" value="1"/>
</dbReference>
<dbReference type="Pfam" id="PF09334">
    <property type="entry name" value="tRNA-synt_1g"/>
    <property type="match status" value="1"/>
</dbReference>
<dbReference type="PRINTS" id="PR00985">
    <property type="entry name" value="TRNASYNTHLEU"/>
</dbReference>
<dbReference type="SUPFAM" id="SSF47323">
    <property type="entry name" value="Anticodon-binding domain of a subclass of class I aminoacyl-tRNA synthetases"/>
    <property type="match status" value="1"/>
</dbReference>
<dbReference type="SUPFAM" id="SSF52374">
    <property type="entry name" value="Nucleotidylyl transferase"/>
    <property type="match status" value="1"/>
</dbReference>
<dbReference type="SUPFAM" id="SSF50677">
    <property type="entry name" value="ValRS/IleRS/LeuRS editing domain"/>
    <property type="match status" value="1"/>
</dbReference>
<dbReference type="PROSITE" id="PS00178">
    <property type="entry name" value="AA_TRNA_LIGASE_I"/>
    <property type="match status" value="1"/>
</dbReference>
<protein>
    <recommendedName>
        <fullName evidence="1">Leucine--tRNA ligase</fullName>
        <ecNumber evidence="1">6.1.1.4</ecNumber>
    </recommendedName>
    <alternativeName>
        <fullName evidence="1">Leucyl-tRNA synthetase</fullName>
        <shortName evidence="1">LeuRS</shortName>
    </alternativeName>
</protein>
<feature type="chain" id="PRO_1000199200" description="Leucine--tRNA ligase">
    <location>
        <begin position="1"/>
        <end position="860"/>
    </location>
</feature>
<feature type="short sequence motif" description="'HIGH' region">
    <location>
        <begin position="42"/>
        <end position="52"/>
    </location>
</feature>
<feature type="short sequence motif" description="'KMSKS' region">
    <location>
        <begin position="619"/>
        <end position="623"/>
    </location>
</feature>
<feature type="binding site" evidence="1">
    <location>
        <position position="622"/>
    </location>
    <ligand>
        <name>ATP</name>
        <dbReference type="ChEBI" id="CHEBI:30616"/>
    </ligand>
</feature>
<gene>
    <name evidence="1" type="primary">leuS</name>
    <name type="ordered locus">EcSMS35_0662</name>
</gene>
<organism>
    <name type="scientific">Escherichia coli (strain SMS-3-5 / SECEC)</name>
    <dbReference type="NCBI Taxonomy" id="439855"/>
    <lineage>
        <taxon>Bacteria</taxon>
        <taxon>Pseudomonadati</taxon>
        <taxon>Pseudomonadota</taxon>
        <taxon>Gammaproteobacteria</taxon>
        <taxon>Enterobacterales</taxon>
        <taxon>Enterobacteriaceae</taxon>
        <taxon>Escherichia</taxon>
    </lineage>
</organism>
<name>SYL_ECOSM</name>